<proteinExistence type="inferred from homology"/>
<organism>
    <name type="scientific">Corynebacterium glutamicum (strain ATCC 13032 / DSM 20300 / JCM 1318 / BCRC 11384 / CCUG 27702 / LMG 3730 / NBRC 12168 / NCIMB 10025 / NRRL B-2784 / 534)</name>
    <dbReference type="NCBI Taxonomy" id="196627"/>
    <lineage>
        <taxon>Bacteria</taxon>
        <taxon>Bacillati</taxon>
        <taxon>Actinomycetota</taxon>
        <taxon>Actinomycetes</taxon>
        <taxon>Mycobacteriales</taxon>
        <taxon>Corynebacteriaceae</taxon>
        <taxon>Corynebacterium</taxon>
    </lineage>
</organism>
<evidence type="ECO:0000255" key="1">
    <source>
        <dbReference type="HAMAP-Rule" id="MF_00210"/>
    </source>
</evidence>
<evidence type="ECO:0000305" key="2"/>
<accession>Q9Z470</accession>
<protein>
    <recommendedName>
        <fullName evidence="1">3-phosphoshikimate 1-carboxyvinyltransferase</fullName>
        <ecNumber evidence="1">2.5.1.19</ecNumber>
    </recommendedName>
    <alternativeName>
        <fullName evidence="1">5-enolpyruvylshikimate-3-phosphate synthase</fullName>
        <shortName evidence="1">EPSP synthase</shortName>
        <shortName evidence="1">EPSPS</shortName>
    </alternativeName>
</protein>
<feature type="chain" id="PRO_0000088251" description="3-phosphoshikimate 1-carboxyvinyltransferase">
    <location>
        <begin position="1"/>
        <end position="430"/>
    </location>
</feature>
<feature type="active site" description="Proton acceptor" evidence="1">
    <location>
        <position position="319"/>
    </location>
</feature>
<feature type="binding site" evidence="1">
    <location>
        <position position="33"/>
    </location>
    <ligand>
        <name>3-phosphoshikimate</name>
        <dbReference type="ChEBI" id="CHEBI:145989"/>
    </ligand>
</feature>
<feature type="binding site" evidence="1">
    <location>
        <position position="33"/>
    </location>
    <ligand>
        <name>phosphoenolpyruvate</name>
        <dbReference type="ChEBI" id="CHEBI:58702"/>
    </ligand>
</feature>
<feature type="binding site" evidence="1">
    <location>
        <position position="34"/>
    </location>
    <ligand>
        <name>3-phosphoshikimate</name>
        <dbReference type="ChEBI" id="CHEBI:145989"/>
    </ligand>
</feature>
<feature type="binding site" evidence="1">
    <location>
        <position position="38"/>
    </location>
    <ligand>
        <name>3-phosphoshikimate</name>
        <dbReference type="ChEBI" id="CHEBI:145989"/>
    </ligand>
</feature>
<feature type="binding site" evidence="1">
    <location>
        <position position="101"/>
    </location>
    <ligand>
        <name>phosphoenolpyruvate</name>
        <dbReference type="ChEBI" id="CHEBI:58702"/>
    </ligand>
</feature>
<feature type="binding site" evidence="1">
    <location>
        <position position="129"/>
    </location>
    <ligand>
        <name>phosphoenolpyruvate</name>
        <dbReference type="ChEBI" id="CHEBI:58702"/>
    </ligand>
</feature>
<feature type="binding site" evidence="1">
    <location>
        <position position="172"/>
    </location>
    <ligand>
        <name>3-phosphoshikimate</name>
        <dbReference type="ChEBI" id="CHEBI:145989"/>
    </ligand>
</feature>
<feature type="binding site" evidence="1">
    <location>
        <position position="173"/>
    </location>
    <ligand>
        <name>3-phosphoshikimate</name>
        <dbReference type="ChEBI" id="CHEBI:145989"/>
    </ligand>
</feature>
<feature type="binding site" evidence="1">
    <location>
        <position position="174"/>
    </location>
    <ligand>
        <name>3-phosphoshikimate</name>
        <dbReference type="ChEBI" id="CHEBI:145989"/>
    </ligand>
</feature>
<feature type="binding site" evidence="1">
    <location>
        <position position="174"/>
    </location>
    <ligand>
        <name>phosphoenolpyruvate</name>
        <dbReference type="ChEBI" id="CHEBI:58702"/>
    </ligand>
</feature>
<feature type="binding site" evidence="1">
    <location>
        <position position="201"/>
    </location>
    <ligand>
        <name>3-phosphoshikimate</name>
        <dbReference type="ChEBI" id="CHEBI:145989"/>
    </ligand>
</feature>
<feature type="binding site" evidence="1">
    <location>
        <position position="319"/>
    </location>
    <ligand>
        <name>3-phosphoshikimate</name>
        <dbReference type="ChEBI" id="CHEBI:145989"/>
    </ligand>
</feature>
<feature type="binding site" evidence="1">
    <location>
        <position position="346"/>
    </location>
    <ligand>
        <name>3-phosphoshikimate</name>
        <dbReference type="ChEBI" id="CHEBI:145989"/>
    </ligand>
</feature>
<feature type="binding site" evidence="1">
    <location>
        <position position="350"/>
    </location>
    <ligand>
        <name>phosphoenolpyruvate</name>
        <dbReference type="ChEBI" id="CHEBI:58702"/>
    </ligand>
</feature>
<feature type="binding site" evidence="1">
    <location>
        <position position="391"/>
    </location>
    <ligand>
        <name>phosphoenolpyruvate</name>
        <dbReference type="ChEBI" id="CHEBI:58702"/>
    </ligand>
</feature>
<feature type="binding site" evidence="1">
    <location>
        <position position="416"/>
    </location>
    <ligand>
        <name>phosphoenolpyruvate</name>
        <dbReference type="ChEBI" id="CHEBI:58702"/>
    </ligand>
</feature>
<feature type="sequence conflict" description="In Ref. 1; AAD13108." evidence="2" ref="1">
    <location>
        <position position="21"/>
    </location>
</feature>
<dbReference type="EC" id="2.5.1.19" evidence="1"/>
<dbReference type="EMBL" id="AF114233">
    <property type="protein sequence ID" value="AAD13108.1"/>
    <property type="status" value="ALT_INIT"/>
    <property type="molecule type" value="Genomic_DNA"/>
</dbReference>
<dbReference type="EMBL" id="BA000036">
    <property type="protein sequence ID" value="BAB98157.1"/>
    <property type="molecule type" value="Genomic_DNA"/>
</dbReference>
<dbReference type="EMBL" id="BX927150">
    <property type="protein sequence ID" value="CAF19468.1"/>
    <property type="molecule type" value="Genomic_DNA"/>
</dbReference>
<dbReference type="RefSeq" id="NP_599992.1">
    <property type="nucleotide sequence ID" value="NC_003450.3"/>
</dbReference>
<dbReference type="RefSeq" id="WP_011013873.1">
    <property type="nucleotide sequence ID" value="NC_006958.1"/>
</dbReference>
<dbReference type="SMR" id="Q9Z470"/>
<dbReference type="STRING" id="196627.cg0873"/>
<dbReference type="GeneID" id="1018759"/>
<dbReference type="KEGG" id="cgb:cg0873"/>
<dbReference type="KEGG" id="cgl:Cgl0764"/>
<dbReference type="PATRIC" id="fig|196627.13.peg.747"/>
<dbReference type="eggNOG" id="COG0128">
    <property type="taxonomic scope" value="Bacteria"/>
</dbReference>
<dbReference type="HOGENOM" id="CLU_024321_0_0_11"/>
<dbReference type="OrthoDB" id="9809920at2"/>
<dbReference type="BioCyc" id="CORYNE:G18NG-10326-MONOMER"/>
<dbReference type="UniPathway" id="UPA00053">
    <property type="reaction ID" value="UER00089"/>
</dbReference>
<dbReference type="Proteomes" id="UP000000582">
    <property type="component" value="Chromosome"/>
</dbReference>
<dbReference type="Proteomes" id="UP000001009">
    <property type="component" value="Chromosome"/>
</dbReference>
<dbReference type="GO" id="GO:0005737">
    <property type="term" value="C:cytoplasm"/>
    <property type="evidence" value="ECO:0007669"/>
    <property type="project" value="UniProtKB-SubCell"/>
</dbReference>
<dbReference type="GO" id="GO:0003866">
    <property type="term" value="F:3-phosphoshikimate 1-carboxyvinyltransferase activity"/>
    <property type="evidence" value="ECO:0007669"/>
    <property type="project" value="UniProtKB-UniRule"/>
</dbReference>
<dbReference type="GO" id="GO:0008652">
    <property type="term" value="P:amino acid biosynthetic process"/>
    <property type="evidence" value="ECO:0007669"/>
    <property type="project" value="UniProtKB-KW"/>
</dbReference>
<dbReference type="GO" id="GO:0009073">
    <property type="term" value="P:aromatic amino acid family biosynthetic process"/>
    <property type="evidence" value="ECO:0007669"/>
    <property type="project" value="UniProtKB-KW"/>
</dbReference>
<dbReference type="GO" id="GO:0009423">
    <property type="term" value="P:chorismate biosynthetic process"/>
    <property type="evidence" value="ECO:0007669"/>
    <property type="project" value="UniProtKB-UniRule"/>
</dbReference>
<dbReference type="CDD" id="cd01556">
    <property type="entry name" value="EPSP_synthase"/>
    <property type="match status" value="1"/>
</dbReference>
<dbReference type="FunFam" id="3.65.10.10:FF:000010">
    <property type="entry name" value="3-phosphoshikimate 1-carboxyvinyltransferase"/>
    <property type="match status" value="1"/>
</dbReference>
<dbReference type="FunFam" id="3.65.10.10:FF:000011">
    <property type="entry name" value="3-phosphoshikimate 1-carboxyvinyltransferase"/>
    <property type="match status" value="1"/>
</dbReference>
<dbReference type="Gene3D" id="3.65.10.10">
    <property type="entry name" value="Enolpyruvate transferase domain"/>
    <property type="match status" value="2"/>
</dbReference>
<dbReference type="HAMAP" id="MF_00210">
    <property type="entry name" value="EPSP_synth"/>
    <property type="match status" value="1"/>
</dbReference>
<dbReference type="InterPro" id="IPR001986">
    <property type="entry name" value="Enolpyruvate_Tfrase_dom"/>
</dbReference>
<dbReference type="InterPro" id="IPR036968">
    <property type="entry name" value="Enolpyruvate_Tfrase_sf"/>
</dbReference>
<dbReference type="InterPro" id="IPR006264">
    <property type="entry name" value="EPSP_synthase"/>
</dbReference>
<dbReference type="InterPro" id="IPR023193">
    <property type="entry name" value="EPSP_synthase_CS"/>
</dbReference>
<dbReference type="InterPro" id="IPR013792">
    <property type="entry name" value="RNA3'P_cycl/enolpyr_Trfase_a/b"/>
</dbReference>
<dbReference type="NCBIfam" id="TIGR01356">
    <property type="entry name" value="aroA"/>
    <property type="match status" value="1"/>
</dbReference>
<dbReference type="PANTHER" id="PTHR21090">
    <property type="entry name" value="AROM/DEHYDROQUINATE SYNTHASE"/>
    <property type="match status" value="1"/>
</dbReference>
<dbReference type="PANTHER" id="PTHR21090:SF5">
    <property type="entry name" value="PENTAFUNCTIONAL AROM POLYPEPTIDE"/>
    <property type="match status" value="1"/>
</dbReference>
<dbReference type="Pfam" id="PF00275">
    <property type="entry name" value="EPSP_synthase"/>
    <property type="match status" value="1"/>
</dbReference>
<dbReference type="PIRSF" id="PIRSF000505">
    <property type="entry name" value="EPSPS"/>
    <property type="match status" value="1"/>
</dbReference>
<dbReference type="SUPFAM" id="SSF55205">
    <property type="entry name" value="EPT/RTPC-like"/>
    <property type="match status" value="1"/>
</dbReference>
<dbReference type="PROSITE" id="PS00104">
    <property type="entry name" value="EPSP_SYNTHASE_1"/>
    <property type="match status" value="1"/>
</dbReference>
<dbReference type="PROSITE" id="PS00885">
    <property type="entry name" value="EPSP_SYNTHASE_2"/>
    <property type="match status" value="1"/>
</dbReference>
<sequence>MVFVSDSSISLPIWDAPRARGPIVSDLAIPGSKSITNRALILAALASTPSTIIDVLRSRDTDLMTDGLRSLGITITEEAVDRYRVEPGQLSAGSVECGLAGTVMRFLPPVAAFADGPVHFDGDPQARVRPMTSILDALRSLGVEVDNNNLPFTVNAGEVPEGGVVEIDASGSSQFVSGLLLSAPRFKNGVTVKHVGGRLPSMPHIEMTVDMLRSAGIEIEESENQWVVHPGEILGRTWRIEPDLSNATPFLAAAAVTGGTIKINHWPIKTTQPGDAIRSILERMGCEVELVAQGEGYDLSVTGPVALKGIEIDMSDIGELTPTVAALAALASTESRLTGIAHLRGHETDRLAALTAEINKLGGKCTELKDGLLIEPASLHGGVWHSYADHRMATAGAIIGLAVDGVQVEDIKTTSKTFPGFENVWEEMVG</sequence>
<name>AROA_CORGL</name>
<comment type="function">
    <text evidence="1">Catalyzes the transfer of the enolpyruvyl moiety of phosphoenolpyruvate (PEP) to the 5-hydroxyl of shikimate-3-phosphate (S3P) to produce enolpyruvyl shikimate-3-phosphate and inorganic phosphate.</text>
</comment>
<comment type="catalytic activity">
    <reaction evidence="1">
        <text>3-phosphoshikimate + phosphoenolpyruvate = 5-O-(1-carboxyvinyl)-3-phosphoshikimate + phosphate</text>
        <dbReference type="Rhea" id="RHEA:21256"/>
        <dbReference type="ChEBI" id="CHEBI:43474"/>
        <dbReference type="ChEBI" id="CHEBI:57701"/>
        <dbReference type="ChEBI" id="CHEBI:58702"/>
        <dbReference type="ChEBI" id="CHEBI:145989"/>
        <dbReference type="EC" id="2.5.1.19"/>
    </reaction>
    <physiologicalReaction direction="left-to-right" evidence="1">
        <dbReference type="Rhea" id="RHEA:21257"/>
    </physiologicalReaction>
</comment>
<comment type="pathway">
    <text evidence="1">Metabolic intermediate biosynthesis; chorismate biosynthesis; chorismate from D-erythrose 4-phosphate and phosphoenolpyruvate: step 6/7.</text>
</comment>
<comment type="subunit">
    <text evidence="1">Monomer.</text>
</comment>
<comment type="subcellular location">
    <subcellularLocation>
        <location evidence="1">Cytoplasm</location>
    </subcellularLocation>
</comment>
<comment type="similarity">
    <text evidence="1 2">Belongs to the EPSP synthase family.</text>
</comment>
<comment type="sequence caution" evidence="2">
    <conflict type="erroneous initiation">
        <sequence resource="EMBL-CDS" id="AAD13108"/>
    </conflict>
    <text>Extended N-terminus.</text>
</comment>
<keyword id="KW-0028">Amino-acid biosynthesis</keyword>
<keyword id="KW-0057">Aromatic amino acid biosynthesis</keyword>
<keyword id="KW-0963">Cytoplasm</keyword>
<keyword id="KW-1185">Reference proteome</keyword>
<keyword id="KW-0808">Transferase</keyword>
<reference key="1">
    <citation type="submission" date="1998-12" db="EMBL/GenBank/DDBJ databases">
        <title>Cloning and molecular analysis of the Corynebacterium glutamicum ASO19 aroA gene.</title>
        <authorList>
            <person name="O'Donohue M."/>
            <person name="Joy J."/>
            <person name="Kerins S."/>
            <person name="Fitzpatrick R."/>
            <person name="Dunican L.K."/>
        </authorList>
    </citation>
    <scope>NUCLEOTIDE SEQUENCE [GENOMIC DNA]</scope>
    <source>
        <strain>ATCC 13059 / LMG 3658 / NCIB 10332 / AS019 / 613</strain>
    </source>
</reference>
<reference key="2">
    <citation type="journal article" date="2003" name="Appl. Microbiol. Biotechnol.">
        <title>The Corynebacterium glutamicum genome: features and impacts on biotechnological processes.</title>
        <authorList>
            <person name="Ikeda M."/>
            <person name="Nakagawa S."/>
        </authorList>
    </citation>
    <scope>NUCLEOTIDE SEQUENCE [LARGE SCALE GENOMIC DNA]</scope>
    <source>
        <strain>ATCC 13032 / DSM 20300 / JCM 1318 / BCRC 11384 / CCUG 27702 / LMG 3730 / NBRC 12168 / NCIMB 10025 / NRRL B-2784 / 534</strain>
    </source>
</reference>
<reference key="3">
    <citation type="journal article" date="2003" name="J. Biotechnol.">
        <title>The complete Corynebacterium glutamicum ATCC 13032 genome sequence and its impact on the production of L-aspartate-derived amino acids and vitamins.</title>
        <authorList>
            <person name="Kalinowski J."/>
            <person name="Bathe B."/>
            <person name="Bartels D."/>
            <person name="Bischoff N."/>
            <person name="Bott M."/>
            <person name="Burkovski A."/>
            <person name="Dusch N."/>
            <person name="Eggeling L."/>
            <person name="Eikmanns B.J."/>
            <person name="Gaigalat L."/>
            <person name="Goesmann A."/>
            <person name="Hartmann M."/>
            <person name="Huthmacher K."/>
            <person name="Kraemer R."/>
            <person name="Linke B."/>
            <person name="McHardy A.C."/>
            <person name="Meyer F."/>
            <person name="Moeckel B."/>
            <person name="Pfefferle W."/>
            <person name="Puehler A."/>
            <person name="Rey D.A."/>
            <person name="Rueckert C."/>
            <person name="Rupp O."/>
            <person name="Sahm H."/>
            <person name="Wendisch V.F."/>
            <person name="Wiegraebe I."/>
            <person name="Tauch A."/>
        </authorList>
    </citation>
    <scope>NUCLEOTIDE SEQUENCE [LARGE SCALE GENOMIC DNA]</scope>
    <source>
        <strain>ATCC 13032 / DSM 20300 / JCM 1318 / BCRC 11384 / CCUG 27702 / LMG 3730 / NBRC 12168 / NCIMB 10025 / NRRL B-2784 / 534</strain>
    </source>
</reference>
<gene>
    <name evidence="1" type="primary">aroA</name>
    <name type="ordered locus">Cgl0764</name>
    <name type="ordered locus">cg0873</name>
</gene>